<protein>
    <recommendedName>
        <fullName>Zinc finger protein 24</fullName>
    </recommendedName>
    <alternativeName>
        <fullName>Retinoic acid suppression protein A</fullName>
        <shortName>RSG-A</shortName>
    </alternativeName>
    <alternativeName>
        <fullName>Zinc finger and SCAN domain-containing protein 3</fullName>
    </alternativeName>
    <alternativeName>
        <fullName>Zinc finger protein 191</fullName>
    </alternativeName>
    <alternativeName>
        <fullName>Zinc finger protein KOX17</fullName>
    </alternativeName>
</protein>
<evidence type="ECO:0000250" key="1"/>
<evidence type="ECO:0000255" key="2">
    <source>
        <dbReference type="PROSITE-ProRule" id="PRU00042"/>
    </source>
</evidence>
<evidence type="ECO:0000255" key="3">
    <source>
        <dbReference type="PROSITE-ProRule" id="PRU00187"/>
    </source>
</evidence>
<evidence type="ECO:0000269" key="4">
    <source>
    </source>
</evidence>
<evidence type="ECO:0000269" key="5">
    <source>
    </source>
</evidence>
<evidence type="ECO:0000269" key="6">
    <source>
    </source>
</evidence>
<evidence type="ECO:0000269" key="7">
    <source>
    </source>
</evidence>
<evidence type="ECO:0000269" key="8">
    <source>
    </source>
</evidence>
<evidence type="ECO:0000269" key="9">
    <source ref="1"/>
</evidence>
<evidence type="ECO:0000269" key="10">
    <source ref="4"/>
</evidence>
<evidence type="ECO:0000303" key="11">
    <source ref="1"/>
</evidence>
<evidence type="ECO:0000305" key="12"/>
<evidence type="ECO:0007744" key="13">
    <source>
    </source>
</evidence>
<evidence type="ECO:0007744" key="14">
    <source>
    </source>
</evidence>
<evidence type="ECO:0007744" key="15">
    <source>
    </source>
</evidence>
<evidence type="ECO:0007744" key="16">
    <source>
    </source>
</evidence>
<evidence type="ECO:0007744" key="17">
    <source>
    </source>
</evidence>
<evidence type="ECO:0007744" key="18">
    <source>
    </source>
</evidence>
<evidence type="ECO:0007744" key="19">
    <source>
    </source>
</evidence>
<evidence type="ECO:0007744" key="20">
    <source>
    </source>
</evidence>
<evidence type="ECO:0007744" key="21">
    <source>
    </source>
</evidence>
<evidence type="ECO:0007829" key="22">
    <source>
        <dbReference type="PDB" id="1X6E"/>
    </source>
</evidence>
<evidence type="ECO:0007829" key="23">
    <source>
        <dbReference type="PDB" id="3LHR"/>
    </source>
</evidence>
<gene>
    <name type="primary">ZNF24</name>
    <name type="synonym">KOX17</name>
    <name type="synonym">ZNF191</name>
    <name type="synonym">ZSCAN3</name>
</gene>
<keyword id="KW-0002">3D-structure</keyword>
<keyword id="KW-0025">Alternative splicing</keyword>
<keyword id="KW-0238">DNA-binding</keyword>
<keyword id="KW-1017">Isopeptide bond</keyword>
<keyword id="KW-0479">Metal-binding</keyword>
<keyword id="KW-0539">Nucleus</keyword>
<keyword id="KW-0597">Phosphoprotein</keyword>
<keyword id="KW-1267">Proteomics identification</keyword>
<keyword id="KW-1185">Reference proteome</keyword>
<keyword id="KW-0677">Repeat</keyword>
<keyword id="KW-0678">Repressor</keyword>
<keyword id="KW-0804">Transcription</keyword>
<keyword id="KW-0805">Transcription regulation</keyword>
<keyword id="KW-0832">Ubl conjugation</keyword>
<keyword id="KW-0862">Zinc</keyword>
<keyword id="KW-0863">Zinc-finger</keyword>
<accession>P17028</accession>
<accession>O14754</accession>
<accession>Q53YE4</accession>
<accession>Q6ICR5</accession>
<accession>Q8IZN4</accession>
<proteinExistence type="evidence at protein level"/>
<organism>
    <name type="scientific">Homo sapiens</name>
    <name type="common">Human</name>
    <dbReference type="NCBI Taxonomy" id="9606"/>
    <lineage>
        <taxon>Eukaryota</taxon>
        <taxon>Metazoa</taxon>
        <taxon>Chordata</taxon>
        <taxon>Craniata</taxon>
        <taxon>Vertebrata</taxon>
        <taxon>Euteleostomi</taxon>
        <taxon>Mammalia</taxon>
        <taxon>Eutheria</taxon>
        <taxon>Euarchontoglires</taxon>
        <taxon>Primates</taxon>
        <taxon>Haplorrhini</taxon>
        <taxon>Catarrhini</taxon>
        <taxon>Hominidae</taxon>
        <taxon>Homo</taxon>
    </lineage>
</organism>
<feature type="chain" id="PRO_0000047352" description="Zinc finger protein 24">
    <location>
        <begin position="1"/>
        <end position="368"/>
    </location>
</feature>
<feature type="domain" description="SCAN box" evidence="3">
    <location>
        <begin position="52"/>
        <end position="134"/>
    </location>
</feature>
<feature type="zinc finger region" description="C2H2-type 1" evidence="2">
    <location>
        <begin position="251"/>
        <end position="273"/>
    </location>
</feature>
<feature type="zinc finger region" description="C2H2-type 2" evidence="2">
    <location>
        <begin position="279"/>
        <end position="301"/>
    </location>
</feature>
<feature type="zinc finger region" description="C2H2-type 3" evidence="2">
    <location>
        <begin position="307"/>
        <end position="329"/>
    </location>
</feature>
<feature type="zinc finger region" description="C2H2-type 4" evidence="2">
    <location>
        <begin position="335"/>
        <end position="357"/>
    </location>
</feature>
<feature type="region of interest" description="Necessary and sufficient for nuclear localization">
    <location>
        <begin position="251"/>
        <end position="301"/>
    </location>
</feature>
<feature type="modified residue" description="Phosphoserine" evidence="14">
    <location>
        <position position="132"/>
    </location>
</feature>
<feature type="modified residue" description="Phosphoserine" evidence="15">
    <location>
        <position position="142"/>
    </location>
</feature>
<feature type="modified residue" description="Phosphoserine" evidence="15">
    <location>
        <position position="274"/>
    </location>
</feature>
<feature type="modified residue" description="Phosphoserine" evidence="16">
    <location>
        <position position="292"/>
    </location>
</feature>
<feature type="modified residue" description="Phosphotyrosine" evidence="13">
    <location>
        <position position="335"/>
    </location>
</feature>
<feature type="cross-link" description="Glycyl lysine isopeptide (Lys-Gly) (interchain with G-Cter in SUMO2)" evidence="21">
    <location>
        <position position="22"/>
    </location>
</feature>
<feature type="cross-link" description="Glycyl lysine isopeptide (Lys-Gly) (interchain with G-Cter in SUMO1); alternate" evidence="17">
    <location>
        <position position="27"/>
    </location>
</feature>
<feature type="cross-link" description="Glycyl lysine isopeptide (Lys-Gly) (interchain with G-Cter in SUMO2); alternate" evidence="17 18 19 20 21">
    <location>
        <position position="27"/>
    </location>
</feature>
<feature type="cross-link" description="Glycyl lysine isopeptide (Lys-Gly) (interchain with G-Cter in SUMO2)" evidence="21">
    <location>
        <position position="147"/>
    </location>
</feature>
<feature type="cross-link" description="Glycyl lysine isopeptide (Lys-Gly) (interchain with G-Cter in SUMO2)" evidence="21">
    <location>
        <position position="177"/>
    </location>
</feature>
<feature type="cross-link" description="Glycyl lysine isopeptide (Lys-Gly) (interchain with G-Cter in SUMO2)" evidence="21">
    <location>
        <position position="236"/>
    </location>
</feature>
<feature type="cross-link" description="Glycyl lysine isopeptide (Lys-Gly) (interchain with G-Cter in SUMO2)" evidence="19 21">
    <location>
        <position position="277"/>
    </location>
</feature>
<feature type="cross-link" description="Glycyl lysine isopeptide (Lys-Gly) (interchain with G-Cter in SUMO2)" evidence="21">
    <location>
        <position position="286"/>
    </location>
</feature>
<feature type="cross-link" description="Glycyl lysine isopeptide (Lys-Gly) (interchain with G-Cter in SUMO2)" evidence="21">
    <location>
        <position position="361"/>
    </location>
</feature>
<feature type="cross-link" description="Glycyl lysine isopeptide (Lys-Gly) (interchain with G-Cter in SUMO2)" evidence="21">
    <location>
        <position position="367"/>
    </location>
</feature>
<feature type="splice variant" id="VSP_039219" description="In isoform 2." evidence="11">
    <original>DDDG</original>
    <variation>VIIP</variation>
    <location>
        <begin position="190"/>
        <end position="193"/>
    </location>
</feature>
<feature type="splice variant" id="VSP_039220" description="In isoform 2." evidence="11">
    <location>
        <begin position="194"/>
        <end position="368"/>
    </location>
</feature>
<feature type="sequence variant" id="VAR_012017" description="In dbSNP:rs2032729." evidence="4 5 6 9 10">
    <original>N</original>
    <variation>S</variation>
    <location>
        <position position="220"/>
    </location>
</feature>
<feature type="sequence variant" id="VAR_012018" description="In dbSNP:rs3568.">
    <original>G</original>
    <variation>W</variation>
    <location>
        <position position="331"/>
    </location>
</feature>
<feature type="mutagenesis site" description="Partial cytoplasmic accumulation." evidence="8">
    <original>K</original>
    <variation>A</variation>
    <location>
        <position position="286"/>
    </location>
</feature>
<feature type="mutagenesis site" description="Partial cytoplasmic accumulation." evidence="8">
    <original>R</original>
    <variation>A</variation>
    <location>
        <position position="290"/>
    </location>
</feature>
<feature type="sequence conflict" description="In Ref. 1; AAB37275 and 4; CAG29324." evidence="12" ref="1 4">
    <original>K</original>
    <variation>E</variation>
    <location>
        <position position="367"/>
    </location>
</feature>
<feature type="helix" evidence="23">
    <location>
        <begin position="47"/>
        <end position="57"/>
    </location>
</feature>
<feature type="helix" evidence="23">
    <location>
        <begin position="60"/>
        <end position="62"/>
    </location>
</feature>
<feature type="strand" evidence="23">
    <location>
        <begin position="63"/>
        <end position="65"/>
    </location>
</feature>
<feature type="helix" evidence="23">
    <location>
        <begin position="66"/>
        <end position="81"/>
    </location>
</feature>
<feature type="turn" evidence="23">
    <location>
        <begin position="83"/>
        <end position="85"/>
    </location>
</feature>
<feature type="helix" evidence="23">
    <location>
        <begin position="88"/>
        <end position="102"/>
    </location>
</feature>
<feature type="helix" evidence="23">
    <location>
        <begin position="106"/>
        <end position="114"/>
    </location>
</feature>
<feature type="helix" evidence="23">
    <location>
        <begin position="120"/>
        <end position="134"/>
    </location>
</feature>
<feature type="turn" evidence="22">
    <location>
        <begin position="272"/>
        <end position="275"/>
    </location>
</feature>
<feature type="strand" evidence="22">
    <location>
        <begin position="282"/>
        <end position="284"/>
    </location>
</feature>
<feature type="strand" evidence="22">
    <location>
        <begin position="287"/>
        <end position="290"/>
    </location>
</feature>
<feature type="helix" evidence="22">
    <location>
        <begin position="291"/>
        <end position="299"/>
    </location>
</feature>
<feature type="helix" evidence="22">
    <location>
        <begin position="300"/>
        <end position="302"/>
    </location>
</feature>
<feature type="strand" evidence="22">
    <location>
        <begin position="310"/>
        <end position="312"/>
    </location>
</feature>
<feature type="strand" evidence="22">
    <location>
        <begin position="315"/>
        <end position="318"/>
    </location>
</feature>
<feature type="helix" evidence="22">
    <location>
        <begin position="319"/>
        <end position="330"/>
    </location>
</feature>
<reference key="1">
    <citation type="submission" date="1996-12" db="EMBL/GenBank/DDBJ databases">
        <authorList>
            <person name="Shi S."/>
            <person name="Yu L."/>
        </authorList>
    </citation>
    <scope>NUCLEOTIDE SEQUENCE [GENOMIC DNA / MRNA] (ISOFORMS 1 AND 2)</scope>
    <scope>VARIANT SER-220</scope>
    <source>
        <tissue>Liver</tissue>
    </source>
</reference>
<reference key="2">
    <citation type="journal article" date="1999" name="J. Biol. Chem.">
        <title>Molecular cloning of six novel Kruppel-like zinc finger genes from hematopoietic cells and identification of a novel transregulatory domain KRNB.</title>
        <authorList>
            <person name="Han Z.-G."/>
            <person name="Zhang Q.-H."/>
            <person name="Ye M."/>
            <person name="Kan L.-X."/>
            <person name="Gu B.-W."/>
            <person name="He K.-L."/>
            <person name="Shi S.-L."/>
            <person name="Zhou J."/>
            <person name="Fu G."/>
            <person name="Mao M."/>
            <person name="Chen S.-J."/>
            <person name="Yu L."/>
            <person name="Chen Z."/>
        </authorList>
    </citation>
    <scope>NUCLEOTIDE SEQUENCE [MRNA] (ISOFORM 1)</scope>
    <scope>FUNCTION</scope>
    <scope>VARIANT SER-220</scope>
    <source>
        <tissue>Bone marrow</tissue>
    </source>
</reference>
<reference key="3">
    <citation type="journal article" date="2004" name="Nat. Genet.">
        <title>Complete sequencing and characterization of 21,243 full-length human cDNAs.</title>
        <authorList>
            <person name="Ota T."/>
            <person name="Suzuki Y."/>
            <person name="Nishikawa T."/>
            <person name="Otsuki T."/>
            <person name="Sugiyama T."/>
            <person name="Irie R."/>
            <person name="Wakamatsu A."/>
            <person name="Hayashi K."/>
            <person name="Sato H."/>
            <person name="Nagai K."/>
            <person name="Kimura K."/>
            <person name="Makita H."/>
            <person name="Sekine M."/>
            <person name="Obayashi M."/>
            <person name="Nishi T."/>
            <person name="Shibahara T."/>
            <person name="Tanaka T."/>
            <person name="Ishii S."/>
            <person name="Yamamoto J."/>
            <person name="Saito K."/>
            <person name="Kawai Y."/>
            <person name="Isono Y."/>
            <person name="Nakamura Y."/>
            <person name="Nagahari K."/>
            <person name="Murakami K."/>
            <person name="Yasuda T."/>
            <person name="Iwayanagi T."/>
            <person name="Wagatsuma M."/>
            <person name="Shiratori A."/>
            <person name="Sudo H."/>
            <person name="Hosoiri T."/>
            <person name="Kaku Y."/>
            <person name="Kodaira H."/>
            <person name="Kondo H."/>
            <person name="Sugawara M."/>
            <person name="Takahashi M."/>
            <person name="Kanda K."/>
            <person name="Yokoi T."/>
            <person name="Furuya T."/>
            <person name="Kikkawa E."/>
            <person name="Omura Y."/>
            <person name="Abe K."/>
            <person name="Kamihara K."/>
            <person name="Katsuta N."/>
            <person name="Sato K."/>
            <person name="Tanikawa M."/>
            <person name="Yamazaki M."/>
            <person name="Ninomiya K."/>
            <person name="Ishibashi T."/>
            <person name="Yamashita H."/>
            <person name="Murakawa K."/>
            <person name="Fujimori K."/>
            <person name="Tanai H."/>
            <person name="Kimata M."/>
            <person name="Watanabe M."/>
            <person name="Hiraoka S."/>
            <person name="Chiba Y."/>
            <person name="Ishida S."/>
            <person name="Ono Y."/>
            <person name="Takiguchi S."/>
            <person name="Watanabe S."/>
            <person name="Yosida M."/>
            <person name="Hotuta T."/>
            <person name="Kusano J."/>
            <person name="Kanehori K."/>
            <person name="Takahashi-Fujii A."/>
            <person name="Hara H."/>
            <person name="Tanase T.-O."/>
            <person name="Nomura Y."/>
            <person name="Togiya S."/>
            <person name="Komai F."/>
            <person name="Hara R."/>
            <person name="Takeuchi K."/>
            <person name="Arita M."/>
            <person name="Imose N."/>
            <person name="Musashino K."/>
            <person name="Yuuki H."/>
            <person name="Oshima A."/>
            <person name="Sasaki N."/>
            <person name="Aotsuka S."/>
            <person name="Yoshikawa Y."/>
            <person name="Matsunawa H."/>
            <person name="Ichihara T."/>
            <person name="Shiohata N."/>
            <person name="Sano S."/>
            <person name="Moriya S."/>
            <person name="Momiyama H."/>
            <person name="Satoh N."/>
            <person name="Takami S."/>
            <person name="Terashima Y."/>
            <person name="Suzuki O."/>
            <person name="Nakagawa S."/>
            <person name="Senoh A."/>
            <person name="Mizoguchi H."/>
            <person name="Goto Y."/>
            <person name="Shimizu F."/>
            <person name="Wakebe H."/>
            <person name="Hishigaki H."/>
            <person name="Watanabe T."/>
            <person name="Sugiyama A."/>
            <person name="Takemoto M."/>
            <person name="Kawakami B."/>
            <person name="Yamazaki M."/>
            <person name="Watanabe K."/>
            <person name="Kumagai A."/>
            <person name="Itakura S."/>
            <person name="Fukuzumi Y."/>
            <person name="Fujimori Y."/>
            <person name="Komiyama M."/>
            <person name="Tashiro H."/>
            <person name="Tanigami A."/>
            <person name="Fujiwara T."/>
            <person name="Ono T."/>
            <person name="Yamada K."/>
            <person name="Fujii Y."/>
            <person name="Ozaki K."/>
            <person name="Hirao M."/>
            <person name="Ohmori Y."/>
            <person name="Kawabata A."/>
            <person name="Hikiji T."/>
            <person name="Kobatake N."/>
            <person name="Inagaki H."/>
            <person name="Ikema Y."/>
            <person name="Okamoto S."/>
            <person name="Okitani R."/>
            <person name="Kawakami T."/>
            <person name="Noguchi S."/>
            <person name="Itoh T."/>
            <person name="Shigeta K."/>
            <person name="Senba T."/>
            <person name="Matsumura K."/>
            <person name="Nakajima Y."/>
            <person name="Mizuno T."/>
            <person name="Morinaga M."/>
            <person name="Sasaki M."/>
            <person name="Togashi T."/>
            <person name="Oyama M."/>
            <person name="Hata H."/>
            <person name="Watanabe M."/>
            <person name="Komatsu T."/>
            <person name="Mizushima-Sugano J."/>
            <person name="Satoh T."/>
            <person name="Shirai Y."/>
            <person name="Takahashi Y."/>
            <person name="Nakagawa K."/>
            <person name="Okumura K."/>
            <person name="Nagase T."/>
            <person name="Nomura N."/>
            <person name="Kikuchi H."/>
            <person name="Masuho Y."/>
            <person name="Yamashita R."/>
            <person name="Nakai K."/>
            <person name="Yada T."/>
            <person name="Nakamura Y."/>
            <person name="Ohara O."/>
            <person name="Isogai T."/>
            <person name="Sugano S."/>
        </authorList>
    </citation>
    <scope>NUCLEOTIDE SEQUENCE [LARGE SCALE MRNA] (ISOFORM 1)</scope>
    <scope>VARIANT SER-220</scope>
</reference>
<reference key="4">
    <citation type="submission" date="2004-05" db="EMBL/GenBank/DDBJ databases">
        <title>Cloning of human full-length CDSs in BD Creator(TM) system donor vector.</title>
        <authorList>
            <person name="Kalnine N."/>
            <person name="Chen X."/>
            <person name="Rolfs A."/>
            <person name="Halleck A."/>
            <person name="Hines L."/>
            <person name="Eisenstein S."/>
            <person name="Koundinya M."/>
            <person name="Raphael J."/>
            <person name="Moreira D."/>
            <person name="Kelley T."/>
            <person name="LaBaer J."/>
            <person name="Lin Y."/>
            <person name="Phelan M."/>
            <person name="Farmer A."/>
        </authorList>
    </citation>
    <scope>NUCLEOTIDE SEQUENCE [LARGE SCALE MRNA] (ISOFORM 1)</scope>
    <scope>VARIANT SER-220</scope>
</reference>
<reference key="5">
    <citation type="journal article" date="2005" name="Nature">
        <title>DNA sequence and analysis of human chromosome 18.</title>
        <authorList>
            <person name="Nusbaum C."/>
            <person name="Zody M.C."/>
            <person name="Borowsky M.L."/>
            <person name="Kamal M."/>
            <person name="Kodira C.D."/>
            <person name="Taylor T.D."/>
            <person name="Whittaker C.A."/>
            <person name="Chang J.L."/>
            <person name="Cuomo C.A."/>
            <person name="Dewar K."/>
            <person name="FitzGerald M.G."/>
            <person name="Yang X."/>
            <person name="Abouelleil A."/>
            <person name="Allen N.R."/>
            <person name="Anderson S."/>
            <person name="Bloom T."/>
            <person name="Bugalter B."/>
            <person name="Butler J."/>
            <person name="Cook A."/>
            <person name="DeCaprio D."/>
            <person name="Engels R."/>
            <person name="Garber M."/>
            <person name="Gnirke A."/>
            <person name="Hafez N."/>
            <person name="Hall J.L."/>
            <person name="Norman C.H."/>
            <person name="Itoh T."/>
            <person name="Jaffe D.B."/>
            <person name="Kuroki Y."/>
            <person name="Lehoczky J."/>
            <person name="Lui A."/>
            <person name="Macdonald P."/>
            <person name="Mauceli E."/>
            <person name="Mikkelsen T.S."/>
            <person name="Naylor J.W."/>
            <person name="Nicol R."/>
            <person name="Nguyen C."/>
            <person name="Noguchi H."/>
            <person name="O'Leary S.B."/>
            <person name="Piqani B."/>
            <person name="Smith C.L."/>
            <person name="Talamas J.A."/>
            <person name="Topham K."/>
            <person name="Totoki Y."/>
            <person name="Toyoda A."/>
            <person name="Wain H.M."/>
            <person name="Young S.K."/>
            <person name="Zeng Q."/>
            <person name="Zimmer A.R."/>
            <person name="Fujiyama A."/>
            <person name="Hattori M."/>
            <person name="Birren B.W."/>
            <person name="Sakaki Y."/>
            <person name="Lander E.S."/>
        </authorList>
    </citation>
    <scope>NUCLEOTIDE SEQUENCE [LARGE SCALE GENOMIC DNA]</scope>
</reference>
<reference key="6">
    <citation type="submission" date="2005-07" db="EMBL/GenBank/DDBJ databases">
        <authorList>
            <person name="Mural R.J."/>
            <person name="Istrail S."/>
            <person name="Sutton G.G."/>
            <person name="Florea L."/>
            <person name="Halpern A.L."/>
            <person name="Mobarry C.M."/>
            <person name="Lippert R."/>
            <person name="Walenz B."/>
            <person name="Shatkay H."/>
            <person name="Dew I."/>
            <person name="Miller J.R."/>
            <person name="Flanigan M.J."/>
            <person name="Edwards N.J."/>
            <person name="Bolanos R."/>
            <person name="Fasulo D."/>
            <person name="Halldorsson B.V."/>
            <person name="Hannenhalli S."/>
            <person name="Turner R."/>
            <person name="Yooseph S."/>
            <person name="Lu F."/>
            <person name="Nusskern D.R."/>
            <person name="Shue B.C."/>
            <person name="Zheng X.H."/>
            <person name="Zhong F."/>
            <person name="Delcher A.L."/>
            <person name="Huson D.H."/>
            <person name="Kravitz S.A."/>
            <person name="Mouchard L."/>
            <person name="Reinert K."/>
            <person name="Remington K.A."/>
            <person name="Clark A.G."/>
            <person name="Waterman M.S."/>
            <person name="Eichler E.E."/>
            <person name="Adams M.D."/>
            <person name="Hunkapiller M.W."/>
            <person name="Myers E.W."/>
            <person name="Venter J.C."/>
        </authorList>
    </citation>
    <scope>NUCLEOTIDE SEQUENCE [LARGE SCALE GENOMIC DNA]</scope>
</reference>
<reference key="7">
    <citation type="journal article" date="2004" name="Genome Res.">
        <title>The status, quality, and expansion of the NIH full-length cDNA project: the Mammalian Gene Collection (MGC).</title>
        <authorList>
            <consortium name="The MGC Project Team"/>
        </authorList>
    </citation>
    <scope>NUCLEOTIDE SEQUENCE [LARGE SCALE MRNA] (ISOFORM 1)</scope>
    <scope>VARIANT SER-220</scope>
    <source>
        <tissue>Lung</tissue>
        <tissue>Testis</tissue>
    </source>
</reference>
<reference key="8">
    <citation type="journal article" date="1990" name="New Biol.">
        <title>Multiple genes encoding zinc finger domains are expressed in human T cells.</title>
        <authorList>
            <person name="Thiesen H.-J."/>
        </authorList>
    </citation>
    <scope>NUCLEOTIDE SEQUENCE [MRNA] OF 319-362 (ISOFORM 1)</scope>
    <source>
        <tissue>Lymphoid tissue</tissue>
    </source>
</reference>
<reference key="9">
    <citation type="journal article" date="2005" name="J. Biol. Chem.">
        <title>Systematic identification and analysis of mammalian small ubiquitin-like modifier substrates.</title>
        <authorList>
            <person name="Gocke C.B."/>
            <person name="Yu H."/>
            <person name="Kang J."/>
        </authorList>
    </citation>
    <scope>SUMOYLATION</scope>
</reference>
<reference key="10">
    <citation type="journal article" date="2005" name="Nat. Biotechnol.">
        <title>Immunoaffinity profiling of tyrosine phosphorylation in cancer cells.</title>
        <authorList>
            <person name="Rush J."/>
            <person name="Moritz A."/>
            <person name="Lee K.A."/>
            <person name="Guo A."/>
            <person name="Goss V.L."/>
            <person name="Spek E.J."/>
            <person name="Zhang H."/>
            <person name="Zha X.-M."/>
            <person name="Polakiewicz R.D."/>
            <person name="Comb M.J."/>
        </authorList>
    </citation>
    <scope>PHOSPHORYLATION [LARGE SCALE ANALYSIS] AT TYR-335</scope>
    <scope>IDENTIFICATION BY MASS SPECTROMETRY [LARGE SCALE ANALYSIS]</scope>
</reference>
<reference key="11">
    <citation type="journal article" date="2007" name="Science">
        <title>ATM and ATR substrate analysis reveals extensive protein networks responsive to DNA damage.</title>
        <authorList>
            <person name="Matsuoka S."/>
            <person name="Ballif B.A."/>
            <person name="Smogorzewska A."/>
            <person name="McDonald E.R. III"/>
            <person name="Hurov K.E."/>
            <person name="Luo J."/>
            <person name="Bakalarski C.E."/>
            <person name="Zhao Z."/>
            <person name="Solimini N."/>
            <person name="Lerenthal Y."/>
            <person name="Shiloh Y."/>
            <person name="Gygi S.P."/>
            <person name="Elledge S.J."/>
        </authorList>
    </citation>
    <scope>IDENTIFICATION BY MASS SPECTROMETRY [LARGE SCALE ANALYSIS]</scope>
    <source>
        <tissue>Embryonic kidney</tissue>
    </source>
</reference>
<reference key="12">
    <citation type="journal article" date="2008" name="Proc. Natl. Acad. Sci. U.S.A.">
        <title>A quantitative atlas of mitotic phosphorylation.</title>
        <authorList>
            <person name="Dephoure N."/>
            <person name="Zhou C."/>
            <person name="Villen J."/>
            <person name="Beausoleil S.A."/>
            <person name="Bakalarski C.E."/>
            <person name="Elledge S.J."/>
            <person name="Gygi S.P."/>
        </authorList>
    </citation>
    <scope>PHOSPHORYLATION [LARGE SCALE ANALYSIS] AT SER-132</scope>
    <scope>IDENTIFICATION BY MASS SPECTROMETRY [LARGE SCALE ANALYSIS]</scope>
    <source>
        <tissue>Cervix carcinoma</tissue>
    </source>
</reference>
<reference key="13">
    <citation type="journal article" date="2010" name="Sci. Signal.">
        <title>Quantitative phosphoproteomics reveals widespread full phosphorylation site occupancy during mitosis.</title>
        <authorList>
            <person name="Olsen J.V."/>
            <person name="Vermeulen M."/>
            <person name="Santamaria A."/>
            <person name="Kumar C."/>
            <person name="Miller M.L."/>
            <person name="Jensen L.J."/>
            <person name="Gnad F."/>
            <person name="Cox J."/>
            <person name="Jensen T.S."/>
            <person name="Nigg E.A."/>
            <person name="Brunak S."/>
            <person name="Mann M."/>
        </authorList>
    </citation>
    <scope>PHOSPHORYLATION [LARGE SCALE ANALYSIS] AT SER-142 AND SER-274</scope>
    <scope>IDENTIFICATION BY MASS SPECTROMETRY [LARGE SCALE ANALYSIS]</scope>
    <source>
        <tissue>Cervix carcinoma</tissue>
    </source>
</reference>
<reference key="14">
    <citation type="journal article" date="2011" name="BMC Syst. Biol.">
        <title>Initial characterization of the human central proteome.</title>
        <authorList>
            <person name="Burkard T.R."/>
            <person name="Planyavsky M."/>
            <person name="Kaupe I."/>
            <person name="Breitwieser F.P."/>
            <person name="Buerckstuemmer T."/>
            <person name="Bennett K.L."/>
            <person name="Superti-Furga G."/>
            <person name="Colinge J."/>
        </authorList>
    </citation>
    <scope>IDENTIFICATION BY MASS SPECTROMETRY [LARGE SCALE ANALYSIS]</scope>
</reference>
<reference key="15">
    <citation type="journal article" date="2013" name="J. Proteome Res.">
        <title>Toward a comprehensive characterization of a human cancer cell phosphoproteome.</title>
        <authorList>
            <person name="Zhou H."/>
            <person name="Di Palma S."/>
            <person name="Preisinger C."/>
            <person name="Peng M."/>
            <person name="Polat A.N."/>
            <person name="Heck A.J."/>
            <person name="Mohammed S."/>
        </authorList>
    </citation>
    <scope>PHOSPHORYLATION [LARGE SCALE ANALYSIS] AT SER-292</scope>
    <scope>IDENTIFICATION BY MASS SPECTROMETRY [LARGE SCALE ANALYSIS]</scope>
    <source>
        <tissue>Erythroleukemia</tissue>
    </source>
</reference>
<reference key="16">
    <citation type="journal article" date="2013" name="PLoS ONE">
        <title>Identification of a functional nuclear localization signal mediating nuclear import of the zinc finger transcription factor ZNF24.</title>
        <authorList>
            <person name="Li J.Z."/>
            <person name="Chen X."/>
            <person name="Gong X.L."/>
            <person name="Hu H.Y."/>
            <person name="Shi D."/>
            <person name="Lu Y.M."/>
            <person name="Qiu L."/>
            <person name="Lu F."/>
            <person name="Hu Z.L."/>
            <person name="Zhang J.P."/>
        </authorList>
    </citation>
    <scope>SUBCELLULAR LOCATION</scope>
    <scope>MUTAGENESIS OF LYS-286 AND ARG-290</scope>
</reference>
<reference key="17">
    <citation type="journal article" date="2014" name="Nat. Struct. Mol. Biol.">
        <title>Uncovering global SUMOylation signaling networks in a site-specific manner.</title>
        <authorList>
            <person name="Hendriks I.A."/>
            <person name="D'Souza R.C."/>
            <person name="Yang B."/>
            <person name="Verlaan-de Vries M."/>
            <person name="Mann M."/>
            <person name="Vertegaal A.C."/>
        </authorList>
    </citation>
    <scope>SUMOYLATION [LARGE SCALE ANALYSIS] AT LYS-27</scope>
    <scope>IDENTIFICATION BY MASS SPECTROMETRY [LARGE SCALE ANALYSIS]</scope>
</reference>
<reference key="18">
    <citation type="journal article" date="2014" name="Proc. Natl. Acad. Sci. U.S.A.">
        <title>Mapping of SUMO sites and analysis of SUMOylation changes induced by external stimuli.</title>
        <authorList>
            <person name="Impens F."/>
            <person name="Radoshevich L."/>
            <person name="Cossart P."/>
            <person name="Ribet D."/>
        </authorList>
    </citation>
    <scope>SUMOYLATION [LARGE SCALE ANALYSIS] AT LYS-27</scope>
    <scope>IDENTIFICATION BY MASS SPECTROMETRY [LARGE SCALE ANALYSIS]</scope>
</reference>
<reference key="19">
    <citation type="journal article" date="2015" name="Cell Rep.">
        <title>SUMO-2 orchestrates chromatin modifiers in response to DNA damage.</title>
        <authorList>
            <person name="Hendriks I.A."/>
            <person name="Treffers L.W."/>
            <person name="Verlaan-de Vries M."/>
            <person name="Olsen J.V."/>
            <person name="Vertegaal A.C."/>
        </authorList>
    </citation>
    <scope>SUMOYLATION [LARGE SCALE ANALYSIS] AT LYS-27</scope>
    <scope>IDENTIFICATION BY MASS SPECTROMETRY [LARGE SCALE ANALYSIS]</scope>
</reference>
<reference key="20">
    <citation type="journal article" date="2015" name="Mol. Cell. Proteomics">
        <title>System-wide analysis of SUMOylation dynamics in response to replication stress reveals novel small ubiquitin-like modified target proteins and acceptor lysines relevant for genome stability.</title>
        <authorList>
            <person name="Xiao Z."/>
            <person name="Chang J.G."/>
            <person name="Hendriks I.A."/>
            <person name="Sigurdsson J.O."/>
            <person name="Olsen J.V."/>
            <person name="Vertegaal A.C."/>
        </authorList>
    </citation>
    <scope>SUMOYLATION [LARGE SCALE ANALYSIS] AT LYS-27 AND LYS-277</scope>
    <scope>IDENTIFICATION BY MASS SPECTROMETRY [LARGE SCALE ANALYSIS]</scope>
</reference>
<reference key="21">
    <citation type="journal article" date="2017" name="Nat. Struct. Mol. Biol.">
        <title>Site-specific mapping of the human SUMO proteome reveals co-modification with phosphorylation.</title>
        <authorList>
            <person name="Hendriks I.A."/>
            <person name="Lyon D."/>
            <person name="Young C."/>
            <person name="Jensen L.J."/>
            <person name="Vertegaal A.C."/>
            <person name="Nielsen M.L."/>
        </authorList>
    </citation>
    <scope>SUMOYLATION [LARGE SCALE ANALYSIS] AT LYS-22; LYS-27; LYS-147; LYS-177; LYS-236; LYS-277; LYS-286; LYS-361 AND LYS-367</scope>
    <scope>IDENTIFICATION BY MASS SPECTROMETRY [LARGE SCALE ANALYSIS]</scope>
</reference>
<reference key="22">
    <citation type="submission" date="2005-11" db="PDB data bank">
        <title>Solution structures of the C2H2 type zinc finger domain of human zinc finger protein 24.</title>
        <authorList>
            <consortium name="RIKEN structural genomics initiative (RSGI)"/>
        </authorList>
    </citation>
    <scope>STRUCTURE BY NMR OF 272-330</scope>
</reference>
<dbReference type="EMBL" id="U68536">
    <property type="protein sequence ID" value="AAB37275.1"/>
    <property type="molecule type" value="mRNA"/>
</dbReference>
<dbReference type="EMBL" id="AF016052">
    <property type="protein sequence ID" value="AAB70216.1"/>
    <property type="molecule type" value="Genomic_DNA"/>
</dbReference>
<dbReference type="EMBL" id="AF542097">
    <property type="protein sequence ID" value="AAN40767.1"/>
    <property type="molecule type" value="mRNA"/>
</dbReference>
<dbReference type="EMBL" id="AF038964">
    <property type="protein sequence ID" value="AAD19827.1"/>
    <property type="molecule type" value="mRNA"/>
</dbReference>
<dbReference type="EMBL" id="AK291246">
    <property type="protein sequence ID" value="BAF83935.1"/>
    <property type="molecule type" value="mRNA"/>
</dbReference>
<dbReference type="EMBL" id="BT006658">
    <property type="protein sequence ID" value="AAP35304.1"/>
    <property type="molecule type" value="mRNA"/>
</dbReference>
<dbReference type="EMBL" id="CR450328">
    <property type="protein sequence ID" value="CAG29324.1"/>
    <property type="molecule type" value="mRNA"/>
</dbReference>
<dbReference type="EMBL" id="AC116447">
    <property type="status" value="NOT_ANNOTATED_CDS"/>
    <property type="molecule type" value="Genomic_DNA"/>
</dbReference>
<dbReference type="EMBL" id="CH471088">
    <property type="protein sequence ID" value="EAX01348.1"/>
    <property type="molecule type" value="Genomic_DNA"/>
</dbReference>
<dbReference type="EMBL" id="CH471088">
    <property type="protein sequence ID" value="EAX01349.1"/>
    <property type="molecule type" value="Genomic_DNA"/>
</dbReference>
<dbReference type="EMBL" id="BC003566">
    <property type="protein sequence ID" value="AAH03566.1"/>
    <property type="molecule type" value="mRNA"/>
</dbReference>
<dbReference type="EMBL" id="BC016801">
    <property type="protein sequence ID" value="AAH16801.1"/>
    <property type="molecule type" value="mRNA"/>
</dbReference>
<dbReference type="EMBL" id="X52348">
    <property type="protein sequence ID" value="CAA36574.1"/>
    <property type="molecule type" value="mRNA"/>
</dbReference>
<dbReference type="CCDS" id="CCDS11912.1">
    <molecule id="P17028-1"/>
</dbReference>
<dbReference type="CCDS" id="CCDS77175.1">
    <molecule id="P17028-2"/>
</dbReference>
<dbReference type="PIR" id="I37956">
    <property type="entry name" value="I37956"/>
</dbReference>
<dbReference type="RefSeq" id="NP_001295052.1">
    <molecule id="P17028-2"/>
    <property type="nucleotide sequence ID" value="NM_001308123.2"/>
</dbReference>
<dbReference type="RefSeq" id="NP_001362744.1">
    <molecule id="P17028-1"/>
    <property type="nucleotide sequence ID" value="NM_001375815.1"/>
</dbReference>
<dbReference type="RefSeq" id="NP_008896.2">
    <molecule id="P17028-1"/>
    <property type="nucleotide sequence ID" value="NM_006965.4"/>
</dbReference>
<dbReference type="RefSeq" id="XP_005258398.1">
    <property type="nucleotide sequence ID" value="XM_005258341.3"/>
</dbReference>
<dbReference type="PDB" id="1X6E">
    <property type="method" value="NMR"/>
    <property type="chains" value="A=272-330"/>
</dbReference>
<dbReference type="PDB" id="3LHR">
    <property type="method" value="X-ray"/>
    <property type="resolution" value="1.90 A"/>
    <property type="chains" value="A/B=46-136"/>
</dbReference>
<dbReference type="PDBsum" id="1X6E"/>
<dbReference type="PDBsum" id="3LHR"/>
<dbReference type="SMR" id="P17028"/>
<dbReference type="BioGRID" id="113403">
    <property type="interactions" value="164"/>
</dbReference>
<dbReference type="FunCoup" id="P17028">
    <property type="interactions" value="2591"/>
</dbReference>
<dbReference type="IntAct" id="P17028">
    <property type="interactions" value="125"/>
</dbReference>
<dbReference type="MINT" id="P17028"/>
<dbReference type="STRING" id="9606.ENSP00000382015"/>
<dbReference type="iPTMnet" id="P17028"/>
<dbReference type="PhosphoSitePlus" id="P17028"/>
<dbReference type="SwissPalm" id="P17028"/>
<dbReference type="BioMuta" id="ZNF24"/>
<dbReference type="DMDM" id="160376173"/>
<dbReference type="jPOST" id="P17028"/>
<dbReference type="MassIVE" id="P17028"/>
<dbReference type="PaxDb" id="9606-ENSP00000261332"/>
<dbReference type="PeptideAtlas" id="P17028"/>
<dbReference type="ProteomicsDB" id="53429">
    <molecule id="P17028-1"/>
</dbReference>
<dbReference type="ProteomicsDB" id="53430">
    <molecule id="P17028-2"/>
</dbReference>
<dbReference type="Pumba" id="P17028"/>
<dbReference type="Antibodypedia" id="8576">
    <property type="antibodies" value="268 antibodies from 32 providers"/>
</dbReference>
<dbReference type="DNASU" id="7572"/>
<dbReference type="Ensembl" id="ENST00000261332.11">
    <molecule id="P17028-1"/>
    <property type="protein sequence ID" value="ENSP00000261332.5"/>
    <property type="gene ID" value="ENSG00000172466.16"/>
</dbReference>
<dbReference type="Ensembl" id="ENST00000399061.3">
    <molecule id="P17028-1"/>
    <property type="protein sequence ID" value="ENSP00000382015.2"/>
    <property type="gene ID" value="ENSG00000172466.16"/>
</dbReference>
<dbReference type="Ensembl" id="ENST00000589881.5">
    <molecule id="P17028-2"/>
    <property type="protein sequence ID" value="ENSP00000467655.1"/>
    <property type="gene ID" value="ENSG00000172466.16"/>
</dbReference>
<dbReference type="GeneID" id="7572"/>
<dbReference type="KEGG" id="hsa:7572"/>
<dbReference type="MANE-Select" id="ENST00000261332.11">
    <property type="protein sequence ID" value="ENSP00000261332.5"/>
    <property type="RefSeq nucleotide sequence ID" value="NM_006965.4"/>
    <property type="RefSeq protein sequence ID" value="NP_008896.2"/>
</dbReference>
<dbReference type="UCSC" id="uc002kys.3">
    <molecule id="P17028-1"/>
    <property type="organism name" value="human"/>
</dbReference>
<dbReference type="AGR" id="HGNC:13032"/>
<dbReference type="CTD" id="7572"/>
<dbReference type="DisGeNET" id="7572"/>
<dbReference type="GeneCards" id="ZNF24"/>
<dbReference type="HGNC" id="HGNC:13032">
    <property type="gene designation" value="ZNF24"/>
</dbReference>
<dbReference type="HPA" id="ENSG00000172466">
    <property type="expression patterns" value="Low tissue specificity"/>
</dbReference>
<dbReference type="MalaCards" id="ZNF24"/>
<dbReference type="MIM" id="194534">
    <property type="type" value="gene"/>
</dbReference>
<dbReference type="neXtProt" id="NX_P17028"/>
<dbReference type="OpenTargets" id="ENSG00000172466"/>
<dbReference type="PharmGKB" id="PA37610"/>
<dbReference type="VEuPathDB" id="HostDB:ENSG00000172466"/>
<dbReference type="eggNOG" id="KOG1721">
    <property type="taxonomic scope" value="Eukaryota"/>
</dbReference>
<dbReference type="GeneTree" id="ENSGT00940000161396"/>
<dbReference type="HOGENOM" id="CLU_002678_49_3_1"/>
<dbReference type="InParanoid" id="P17028"/>
<dbReference type="OMA" id="VAQIFKY"/>
<dbReference type="OrthoDB" id="427030at2759"/>
<dbReference type="PAN-GO" id="P17028">
    <property type="GO annotations" value="3 GO annotations based on evolutionary models"/>
</dbReference>
<dbReference type="PhylomeDB" id="P17028"/>
<dbReference type="TreeFam" id="TF338304"/>
<dbReference type="PathwayCommons" id="P17028"/>
<dbReference type="SignaLink" id="P17028"/>
<dbReference type="BioGRID-ORCS" id="7572">
    <property type="hits" value="82 hits in 1180 CRISPR screens"/>
</dbReference>
<dbReference type="CD-CODE" id="1A18FFC4">
    <property type="entry name" value="Paraspeckle"/>
</dbReference>
<dbReference type="ChiTaRS" id="ZNF24">
    <property type="organism name" value="human"/>
</dbReference>
<dbReference type="EvolutionaryTrace" id="P17028"/>
<dbReference type="GeneWiki" id="ZNF24"/>
<dbReference type="GenomeRNAi" id="7572"/>
<dbReference type="Pharos" id="P17028">
    <property type="development level" value="Tbio"/>
</dbReference>
<dbReference type="PRO" id="PR:P17028"/>
<dbReference type="Proteomes" id="UP000005640">
    <property type="component" value="Chromosome 18"/>
</dbReference>
<dbReference type="RNAct" id="P17028">
    <property type="molecule type" value="protein"/>
</dbReference>
<dbReference type="Bgee" id="ENSG00000172466">
    <property type="expression patterns" value="Expressed in medial globus pallidus and 215 other cell types or tissues"/>
</dbReference>
<dbReference type="ExpressionAtlas" id="P17028">
    <property type="expression patterns" value="baseline and differential"/>
</dbReference>
<dbReference type="GO" id="GO:0005654">
    <property type="term" value="C:nucleoplasm"/>
    <property type="evidence" value="ECO:0000314"/>
    <property type="project" value="HPA"/>
</dbReference>
<dbReference type="GO" id="GO:0005634">
    <property type="term" value="C:nucleus"/>
    <property type="evidence" value="ECO:0000250"/>
    <property type="project" value="UniProtKB"/>
</dbReference>
<dbReference type="GO" id="GO:0001228">
    <property type="term" value="F:DNA-binding transcription activator activity, RNA polymerase II-specific"/>
    <property type="evidence" value="ECO:0000314"/>
    <property type="project" value="NTNU_SB"/>
</dbReference>
<dbReference type="GO" id="GO:0000981">
    <property type="term" value="F:DNA-binding transcription factor activity, RNA polymerase II-specific"/>
    <property type="evidence" value="ECO:0000318"/>
    <property type="project" value="GO_Central"/>
</dbReference>
<dbReference type="GO" id="GO:0042802">
    <property type="term" value="F:identical protein binding"/>
    <property type="evidence" value="ECO:0000353"/>
    <property type="project" value="IntAct"/>
</dbReference>
<dbReference type="GO" id="GO:0000978">
    <property type="term" value="F:RNA polymerase II cis-regulatory region sequence-specific DNA binding"/>
    <property type="evidence" value="ECO:0000318"/>
    <property type="project" value="GO_Central"/>
</dbReference>
<dbReference type="GO" id="GO:0043565">
    <property type="term" value="F:sequence-specific DNA binding"/>
    <property type="evidence" value="ECO:0000314"/>
    <property type="project" value="NTNU_SB"/>
</dbReference>
<dbReference type="GO" id="GO:0008270">
    <property type="term" value="F:zinc ion binding"/>
    <property type="evidence" value="ECO:0007669"/>
    <property type="project" value="UniProtKB-KW"/>
</dbReference>
<dbReference type="GO" id="GO:0042552">
    <property type="term" value="P:myelination"/>
    <property type="evidence" value="ECO:0000250"/>
    <property type="project" value="UniProtKB"/>
</dbReference>
<dbReference type="GO" id="GO:0045892">
    <property type="term" value="P:negative regulation of DNA-templated transcription"/>
    <property type="evidence" value="ECO:0000314"/>
    <property type="project" value="UniProtKB"/>
</dbReference>
<dbReference type="GO" id="GO:0045944">
    <property type="term" value="P:positive regulation of transcription by RNA polymerase II"/>
    <property type="evidence" value="ECO:0000314"/>
    <property type="project" value="NTNU_SB"/>
</dbReference>
<dbReference type="GO" id="GO:0006357">
    <property type="term" value="P:regulation of transcription by RNA polymerase II"/>
    <property type="evidence" value="ECO:0000318"/>
    <property type="project" value="GO_Central"/>
</dbReference>
<dbReference type="CDD" id="cd07936">
    <property type="entry name" value="SCAN"/>
    <property type="match status" value="1"/>
</dbReference>
<dbReference type="FunFam" id="3.30.160.60:FF:000824">
    <property type="entry name" value="Zinc finger protein 184"/>
    <property type="match status" value="1"/>
</dbReference>
<dbReference type="FunFam" id="3.30.160.60:FF:000358">
    <property type="entry name" value="zinc finger protein 24"/>
    <property type="match status" value="1"/>
</dbReference>
<dbReference type="FunFam" id="3.30.160.60:FF:000632">
    <property type="entry name" value="zinc finger protein 24 isoform X1"/>
    <property type="match status" value="1"/>
</dbReference>
<dbReference type="FunFam" id="1.10.4020.10:FF:000001">
    <property type="entry name" value="zinc finger protein 263 isoform X1"/>
    <property type="match status" value="1"/>
</dbReference>
<dbReference type="FunFam" id="3.30.160.60:FF:000953">
    <property type="entry name" value="Zinc finger protein 691"/>
    <property type="match status" value="1"/>
</dbReference>
<dbReference type="Gene3D" id="3.30.160.60">
    <property type="entry name" value="Classic Zinc Finger"/>
    <property type="match status" value="4"/>
</dbReference>
<dbReference type="Gene3D" id="1.10.4020.10">
    <property type="entry name" value="DNA breaking-rejoining enzymes"/>
    <property type="match status" value="1"/>
</dbReference>
<dbReference type="InterPro" id="IPR003309">
    <property type="entry name" value="SCAN_dom"/>
</dbReference>
<dbReference type="InterPro" id="IPR038269">
    <property type="entry name" value="SCAN_sf"/>
</dbReference>
<dbReference type="InterPro" id="IPR036236">
    <property type="entry name" value="Znf_C2H2_sf"/>
</dbReference>
<dbReference type="InterPro" id="IPR013087">
    <property type="entry name" value="Znf_C2H2_type"/>
</dbReference>
<dbReference type="PANTHER" id="PTHR23235:SF178">
    <property type="entry name" value="C2H2-TYPE DOMAIN-CONTAINING PROTEIN-RELATED"/>
    <property type="match status" value="1"/>
</dbReference>
<dbReference type="PANTHER" id="PTHR23235">
    <property type="entry name" value="KRUEPPEL-LIKE TRANSCRIPTION FACTOR"/>
    <property type="match status" value="1"/>
</dbReference>
<dbReference type="Pfam" id="PF02023">
    <property type="entry name" value="SCAN"/>
    <property type="match status" value="1"/>
</dbReference>
<dbReference type="Pfam" id="PF00096">
    <property type="entry name" value="zf-C2H2"/>
    <property type="match status" value="4"/>
</dbReference>
<dbReference type="SMART" id="SM00431">
    <property type="entry name" value="SCAN"/>
    <property type="match status" value="1"/>
</dbReference>
<dbReference type="SMART" id="SM00355">
    <property type="entry name" value="ZnF_C2H2"/>
    <property type="match status" value="4"/>
</dbReference>
<dbReference type="SUPFAM" id="SSF57667">
    <property type="entry name" value="beta-beta-alpha zinc fingers"/>
    <property type="match status" value="3"/>
</dbReference>
<dbReference type="SUPFAM" id="SSF47353">
    <property type="entry name" value="Retrovirus capsid dimerization domain-like"/>
    <property type="match status" value="1"/>
</dbReference>
<dbReference type="PROSITE" id="PS50804">
    <property type="entry name" value="SCAN_BOX"/>
    <property type="match status" value="1"/>
</dbReference>
<dbReference type="PROSITE" id="PS00028">
    <property type="entry name" value="ZINC_FINGER_C2H2_1"/>
    <property type="match status" value="4"/>
</dbReference>
<dbReference type="PROSITE" id="PS50157">
    <property type="entry name" value="ZINC_FINGER_C2H2_2"/>
    <property type="match status" value="4"/>
</dbReference>
<comment type="function">
    <text evidence="1 4">Transcription factor required for myelination of differentiated oligodendrocytes. Required for the conversion of oligodendrocytes from the premyelinating to the myelinating state. In the developing central nervous system (CNS), involved in the maintenance in the progenitor stage by promoting the cell cycle. Specifically binds to the 5'-TCAT-3' DNA sequence (By similarity). Has transcription repressor activity in vitro.</text>
</comment>
<comment type="interaction">
    <interactant intactId="EBI-707773">
        <id>P17028</id>
    </interactant>
    <interactant intactId="EBI-296087">
        <id>P31749</id>
        <label>AKT1</label>
    </interactant>
    <organismsDiffer>false</organismsDiffer>
    <experiments>3</experiments>
</comment>
<comment type="interaction">
    <interactant intactId="EBI-707773">
        <id>P17028</id>
    </interactant>
    <interactant intactId="EBI-74648">
        <id>P51693</id>
        <label>APLP1</label>
    </interactant>
    <organismsDiffer>false</organismsDiffer>
    <experiments>2</experiments>
</comment>
<comment type="interaction">
    <interactant intactId="EBI-707773">
        <id>P17028</id>
    </interactant>
    <interactant intactId="EBI-1222467">
        <id>P02649</id>
        <label>APOE</label>
    </interactant>
    <organismsDiffer>false</organismsDiffer>
    <experiments>3</experiments>
</comment>
<comment type="interaction">
    <interactant intactId="EBI-707773">
        <id>P17028</id>
    </interactant>
    <interactant intactId="EBI-77613">
        <id>P05067</id>
        <label>APP</label>
    </interactant>
    <organismsDiffer>false</organismsDiffer>
    <experiments>3</experiments>
</comment>
<comment type="interaction">
    <interactant intactId="EBI-707773">
        <id>P17028</id>
    </interactant>
    <interactant intactId="EBI-351257">
        <id>P26196</id>
        <label>DDX6</label>
    </interactant>
    <organismsDiffer>false</organismsDiffer>
    <experiments>3</experiments>
</comment>
<comment type="interaction">
    <interactant intactId="EBI-707773">
        <id>P17028</id>
    </interactant>
    <interactant intactId="EBI-10976677">
        <id>G5E9A7</id>
        <label>DMWD</label>
    </interactant>
    <organismsDiffer>false</organismsDiffer>
    <experiments>3</experiments>
</comment>
<comment type="interaction">
    <interactant intactId="EBI-707773">
        <id>P17028</id>
    </interactant>
    <interactant intactId="EBI-948630">
        <id>Q86Y13</id>
        <label>DZIP3</label>
    </interactant>
    <organismsDiffer>false</organismsDiffer>
    <experiments>5</experiments>
</comment>
<comment type="interaction">
    <interactant intactId="EBI-707773">
        <id>P17028</id>
    </interactant>
    <interactant intactId="EBI-719941">
        <id>Q3B820</id>
        <label>FAM161A</label>
    </interactant>
    <organismsDiffer>false</organismsDiffer>
    <experiments>3</experiments>
</comment>
<comment type="interaction">
    <interactant intactId="EBI-707773">
        <id>P17028</id>
    </interactant>
    <interactant intactId="EBI-8639312">
        <id>P25800</id>
        <label>LMO1</label>
    </interactant>
    <organismsDiffer>false</organismsDiffer>
    <experiments>5</experiments>
</comment>
<comment type="interaction">
    <interactant intactId="EBI-707773">
        <id>P17028</id>
    </interactant>
    <interactant intactId="EBI-739696">
        <id>P25791</id>
        <label>LMO2</label>
    </interactant>
    <organismsDiffer>false</organismsDiffer>
    <experiments>4</experiments>
</comment>
<comment type="interaction">
    <interactant intactId="EBI-707773">
        <id>P17028</id>
    </interactant>
    <interactant intactId="EBI-11959475">
        <id>P25791-3</id>
        <label>LMO2</label>
    </interactant>
    <organismsDiffer>false</organismsDiffer>
    <experiments>3</experiments>
</comment>
<comment type="interaction">
    <interactant intactId="EBI-707773">
        <id>P17028</id>
    </interactant>
    <interactant intactId="EBI-2603996">
        <id>Q9BXW4</id>
        <label>MAP1LC3C</label>
    </interactant>
    <organismsDiffer>false</organismsDiffer>
    <experiments>3</experiments>
</comment>
<comment type="interaction">
    <interactant intactId="EBI-707773">
        <id>P17028</id>
    </interactant>
    <interactant intactId="EBI-10172526">
        <id>Q9UJV3-2</id>
        <label>MID2</label>
    </interactant>
    <organismsDiffer>false</organismsDiffer>
    <experiments>3</experiments>
</comment>
<comment type="interaction">
    <interactant intactId="EBI-707773">
        <id>P17028</id>
    </interactant>
    <interactant intactId="EBI-11750983">
        <id>Q9HC98-4</id>
        <label>NEK6</label>
    </interactant>
    <organismsDiffer>false</organismsDiffer>
    <experiments>3</experiments>
</comment>
<comment type="interaction">
    <interactant intactId="EBI-707773">
        <id>P17028</id>
    </interactant>
    <interactant intactId="EBI-10290053">
        <id>Q96JS3</id>
        <label>PGBD1</label>
    </interactant>
    <organismsDiffer>false</organismsDiffer>
    <experiments>9</experiments>
</comment>
<comment type="interaction">
    <interactant intactId="EBI-707773">
        <id>P17028</id>
    </interactant>
    <interactant intactId="EBI-1567797">
        <id>Q8WWY3</id>
        <label>PRPF31</label>
    </interactant>
    <organismsDiffer>false</organismsDiffer>
    <experiments>3</experiments>
</comment>
<comment type="interaction">
    <interactant intactId="EBI-707773">
        <id>P17028</id>
    </interactant>
    <interactant intactId="EBI-458391">
        <id>P04271</id>
        <label>S100B</label>
    </interactant>
    <organismsDiffer>false</organismsDiffer>
    <experiments>3</experiments>
</comment>
<comment type="interaction">
    <interactant intactId="EBI-707773">
        <id>P17028</id>
    </interactant>
    <interactant intactId="EBI-745846">
        <id>P57086</id>
        <label>SCAND1</label>
    </interactant>
    <organismsDiffer>false</organismsDiffer>
    <experiments>8</experiments>
</comment>
<comment type="interaction">
    <interactant intactId="EBI-707773">
        <id>P17028</id>
    </interactant>
    <interactant intactId="EBI-5235340">
        <id>Q7Z699</id>
        <label>SPRED1</label>
    </interactant>
    <organismsDiffer>false</organismsDiffer>
    <experiments>3</experiments>
</comment>
<comment type="interaction">
    <interactant intactId="EBI-707773">
        <id>P17028</id>
    </interactant>
    <interactant intactId="EBI-307104">
        <id>Q13501</id>
        <label>SQSTM1</label>
    </interactant>
    <organismsDiffer>false</organismsDiffer>
    <experiments>3</experiments>
</comment>
<comment type="interaction">
    <interactant intactId="EBI-707773">
        <id>P17028</id>
    </interactant>
    <interactant intactId="EBI-25892332">
        <id>P43405-2</id>
        <label>SYK</label>
    </interactant>
    <organismsDiffer>false</organismsDiffer>
    <experiments>3</experiments>
</comment>
<comment type="interaction">
    <interactant intactId="EBI-707773">
        <id>P17028</id>
    </interactant>
    <interactant intactId="EBI-750484">
        <id>Q9Y4C2</id>
        <label>TCAF1</label>
    </interactant>
    <organismsDiffer>false</organismsDiffer>
    <experiments>3</experiments>
</comment>
<comment type="interaction">
    <interactant intactId="EBI-707773">
        <id>P17028</id>
    </interactant>
    <interactant intactId="EBI-10180829">
        <id>Q7KZS0</id>
        <label>UBE2I</label>
    </interactant>
    <organismsDiffer>false</organismsDiffer>
    <experiments>3</experiments>
</comment>
<comment type="interaction">
    <interactant intactId="EBI-707773">
        <id>P17028</id>
    </interactant>
    <interactant intactId="EBI-716093">
        <id>P13994</id>
        <label>YJU2B</label>
    </interactant>
    <organismsDiffer>false</organismsDiffer>
    <experiments>7</experiments>
</comment>
<comment type="interaction">
    <interactant intactId="EBI-707773">
        <id>P17028</id>
    </interactant>
    <interactant intactId="EBI-10183064">
        <id>Q8N5A5-2</id>
        <label>ZGPAT</label>
    </interactant>
    <organismsDiffer>false</organismsDiffer>
    <experiments>3</experiments>
</comment>
<comment type="interaction">
    <interactant intactId="EBI-707773">
        <id>P17028</id>
    </interactant>
    <interactant intactId="EBI-2818641">
        <id>Q969J2</id>
        <label>ZKSCAN4</label>
    </interactant>
    <organismsDiffer>false</organismsDiffer>
    <experiments>7</experiments>
</comment>
<comment type="interaction">
    <interactant intactId="EBI-707773">
        <id>P17028</id>
    </interactant>
    <interactant intactId="EBI-741694">
        <id>P49910</id>
        <label>ZNF165</label>
    </interactant>
    <organismsDiffer>false</organismsDiffer>
    <experiments>3</experiments>
</comment>
<comment type="interaction">
    <interactant intactId="EBI-707773">
        <id>P17028</id>
    </interactant>
    <interactant intactId="EBI-11158827">
        <id>Q15697-2</id>
        <label>ZNF174</label>
    </interactant>
    <organismsDiffer>false</organismsDiffer>
    <experiments>4</experiments>
</comment>
<comment type="interaction">
    <interactant intactId="EBI-707773">
        <id>P17028</id>
    </interactant>
    <interactant intactId="EBI-749023">
        <id>Q9UNY5</id>
        <label>ZNF232</label>
    </interactant>
    <organismsDiffer>false</organismsDiffer>
    <experiments>4</experiments>
</comment>
<comment type="interaction">
    <interactant intactId="EBI-707773">
        <id>P17028</id>
    </interactant>
    <interactant intactId="EBI-707773">
        <id>P17028</id>
        <label>ZNF24</label>
    </interactant>
    <organismsDiffer>false</organismsDiffer>
    <experiments>4</experiments>
</comment>
<comment type="interaction">
    <interactant intactId="EBI-707773">
        <id>P17028</id>
    </interactant>
    <interactant intactId="EBI-12328453">
        <id>Q96N95-3</id>
        <label>ZNF396</label>
    </interactant>
    <organismsDiffer>false</organismsDiffer>
    <experiments>5</experiments>
</comment>
<comment type="interaction">
    <interactant intactId="EBI-707773">
        <id>P17028</id>
    </interactant>
    <interactant intactId="EBI-11741890">
        <id>Q86VK4-3</id>
        <label>ZNF410</label>
    </interactant>
    <organismsDiffer>false</organismsDiffer>
    <experiments>3</experiments>
</comment>
<comment type="interaction">
    <interactant intactId="EBI-707773">
        <id>P17028</id>
    </interactant>
    <interactant intactId="EBI-12010736">
        <id>Q8N0Y2-2</id>
        <label>ZNF444</label>
    </interactant>
    <organismsDiffer>false</organismsDiffer>
    <experiments>6</experiments>
</comment>
<comment type="interaction">
    <interactant intactId="EBI-707773">
        <id>P17028</id>
    </interactant>
    <interactant intactId="EBI-3925851">
        <id>Q9NWS9</id>
        <label>ZNF446</label>
    </interactant>
    <organismsDiffer>false</organismsDiffer>
    <experiments>7</experiments>
</comment>
<comment type="interaction">
    <interactant intactId="EBI-707773">
        <id>P17028</id>
    </interactant>
    <interactant intactId="EBI-740232">
        <id>Q9NWS9-2</id>
        <label>ZNF446</label>
    </interactant>
    <organismsDiffer>false</organismsDiffer>
    <experiments>13</experiments>
</comment>
<comment type="interaction">
    <interactant intactId="EBI-707773">
        <id>P17028</id>
    </interactant>
    <interactant intactId="EBI-10196963">
        <id>Q6P088</id>
        <label>ZNF483</label>
    </interactant>
    <organismsDiffer>false</organismsDiffer>
    <experiments>3</experiments>
</comment>
<comment type="interaction">
    <interactant intactId="EBI-707773">
        <id>P17028</id>
    </interactant>
    <interactant intactId="EBI-4395669">
        <id>Q6ZNG0</id>
        <label>ZNF620</label>
    </interactant>
    <organismsDiffer>false</organismsDiffer>
    <experiments>3</experiments>
</comment>
<comment type="interaction">
    <interactant intactId="EBI-707773">
        <id>P17028</id>
    </interactant>
    <interactant intactId="EBI-1210440">
        <id>O43309</id>
        <label>ZSCAN12</label>
    </interactant>
    <organismsDiffer>false</organismsDiffer>
    <experiments>3</experiments>
</comment>
<comment type="interaction">
    <interactant intactId="EBI-707773">
        <id>P17028</id>
    </interactant>
    <interactant intactId="EBI-723596">
        <id>Q9H4T2</id>
        <label>ZSCAN16</label>
    </interactant>
    <organismsDiffer>false</organismsDiffer>
    <experiments>3</experiments>
</comment>
<comment type="interaction">
    <interactant intactId="EBI-707773">
        <id>P17028</id>
    </interactant>
    <interactant intactId="EBI-10281938">
        <id>Q9Y5A6</id>
        <label>ZSCAN21</label>
    </interactant>
    <organismsDiffer>false</organismsDiffer>
    <experiments>8</experiments>
</comment>
<comment type="interaction">
    <interactant intactId="EBI-707773">
        <id>P17028</id>
    </interactant>
    <interactant intactId="EBI-10178224">
        <id>P10073</id>
        <label>ZSCAN22</label>
    </interactant>
    <organismsDiffer>false</organismsDiffer>
    <experiments>6</experiments>
</comment>
<comment type="interaction">
    <interactant intactId="EBI-707773">
        <id>P17028</id>
    </interactant>
    <interactant intactId="EBI-5667532">
        <id>Q3MJ62</id>
        <label>ZSCAN23</label>
    </interactant>
    <organismsDiffer>false</organismsDiffer>
    <experiments>4</experiments>
</comment>
<comment type="interaction">
    <interactant intactId="EBI-707773">
        <id>P17028</id>
    </interactant>
    <interactant intactId="EBI-739949">
        <id>Q9NX65</id>
        <label>ZSCAN32</label>
    </interactant>
    <organismsDiffer>false</organismsDiffer>
    <experiments>11</experiments>
</comment>
<comment type="subcellular location">
    <subcellularLocation>
        <location evidence="3 8">Nucleus</location>
    </subcellularLocation>
</comment>
<comment type="alternative products">
    <event type="alternative splicing"/>
    <isoform>
        <id>P17028-1</id>
        <name>1</name>
        <sequence type="displayed"/>
    </isoform>
    <isoform>
        <id>P17028-2</id>
        <name>2</name>
        <sequence type="described" ref="VSP_039219 VSP_039220"/>
    </isoform>
</comment>
<comment type="tissue specificity">
    <text>Expressed in many tissues except in heart.</text>
</comment>
<comment type="PTM">
    <text evidence="7">Sumoylated.</text>
</comment>
<comment type="similarity">
    <text evidence="12">Belongs to the krueppel C2H2-type zinc-finger protein family.</text>
</comment>
<name>ZNF24_HUMAN</name>
<sequence length="368" mass="42155">MSAQSVEEDSILIIPTPDEEEKILRVKLEEDPDGEEGSSIPWNHLPDPEIFRQRFRQFGYQDSPGPREAVSQLRELCRLWLRPETHTKEQILELVVLEQFVAILPKELQTWVRDHHPENGEEAVTVLEDLESELDDPGQPVSLRRRKREVLVEDMVSQEEAQGLPSSELDAVENQLKWASWELHSLRHCDDDGRTENGALAPKQELPSALESHEVPGTLNMGVPQIFKYGETCFPKGRFERKRNPSRKKQHICDECGKHFSQGSALILHQRIHSGEKPYGCVECGKAFSRSSILVQHQRVHTGEKPYKCLECGKAFSQNSGLINHQRIHTGEKPYECVQCGKSYSQSSNLFRHQRRHNAEKLLNVVKV</sequence>